<accession>Q9BSI4</accession>
<accession>B3W5Q7</accession>
<accession>Q9H904</accession>
<accession>Q9UHC2</accession>
<protein>
    <recommendedName>
        <fullName>TERF1-interacting nuclear factor 2</fullName>
    </recommendedName>
    <alternativeName>
        <fullName>TRF1-interacting nuclear protein 2</fullName>
    </alternativeName>
</protein>
<evidence type="ECO:0000255" key="1"/>
<evidence type="ECO:0000256" key="2">
    <source>
        <dbReference type="SAM" id="MobiDB-lite"/>
    </source>
</evidence>
<evidence type="ECO:0000269" key="3">
    <source>
    </source>
</evidence>
<evidence type="ECO:0000269" key="4">
    <source>
    </source>
</evidence>
<evidence type="ECO:0000269" key="5">
    <source>
    </source>
</evidence>
<evidence type="ECO:0000269" key="6">
    <source>
    </source>
</evidence>
<evidence type="ECO:0000269" key="7">
    <source>
    </source>
</evidence>
<evidence type="ECO:0000269" key="8">
    <source>
    </source>
</evidence>
<evidence type="ECO:0000269" key="9">
    <source>
    </source>
</evidence>
<evidence type="ECO:0000269" key="10">
    <source>
    </source>
</evidence>
<evidence type="ECO:0000269" key="11">
    <source>
    </source>
</evidence>
<evidence type="ECO:0000269" key="12">
    <source>
    </source>
</evidence>
<evidence type="ECO:0000303" key="13">
    <source>
    </source>
</evidence>
<evidence type="ECO:0000303" key="14">
    <source>
    </source>
</evidence>
<evidence type="ECO:0000305" key="15"/>
<evidence type="ECO:0007744" key="16">
    <source>
    </source>
</evidence>
<evidence type="ECO:0007744" key="17">
    <source>
    </source>
</evidence>
<evidence type="ECO:0007744" key="18">
    <source>
    </source>
</evidence>
<evidence type="ECO:0007744" key="19">
    <source>
    </source>
</evidence>
<evidence type="ECO:0007829" key="20">
    <source>
        <dbReference type="PDB" id="3BQO"/>
    </source>
</evidence>
<evidence type="ECO:0007829" key="21">
    <source>
        <dbReference type="PDB" id="5XYF"/>
    </source>
</evidence>
<proteinExistence type="evidence at protein level"/>
<name>TINF2_HUMAN</name>
<organism>
    <name type="scientific">Homo sapiens</name>
    <name type="common">Human</name>
    <dbReference type="NCBI Taxonomy" id="9606"/>
    <lineage>
        <taxon>Eukaryota</taxon>
        <taxon>Metazoa</taxon>
        <taxon>Chordata</taxon>
        <taxon>Craniata</taxon>
        <taxon>Vertebrata</taxon>
        <taxon>Euteleostomi</taxon>
        <taxon>Mammalia</taxon>
        <taxon>Eutheria</taxon>
        <taxon>Euarchontoglires</taxon>
        <taxon>Primates</taxon>
        <taxon>Haplorrhini</taxon>
        <taxon>Catarrhini</taxon>
        <taxon>Hominidae</taxon>
        <taxon>Homo</taxon>
    </lineage>
</organism>
<keyword id="KW-0002">3D-structure</keyword>
<keyword id="KW-0007">Acetylation</keyword>
<keyword id="KW-0025">Alternative splicing</keyword>
<keyword id="KW-0158">Chromosome</keyword>
<keyword id="KW-0225">Disease variant</keyword>
<keyword id="KW-1011">Dyskeratosis congenita</keyword>
<keyword id="KW-1017">Isopeptide bond</keyword>
<keyword id="KW-0539">Nucleus</keyword>
<keyword id="KW-0597">Phosphoprotein</keyword>
<keyword id="KW-1267">Proteomics identification</keyword>
<keyword id="KW-1185">Reference proteome</keyword>
<keyword id="KW-0779">Telomere</keyword>
<keyword id="KW-0832">Ubl conjugation</keyword>
<gene>
    <name type="primary">TINF2</name>
    <name type="synonym">TIN2</name>
</gene>
<sequence length="451" mass="50023">MATPLVAGPAALRFAAAASWQVVRGRCVEHFPRVLEFLRSLRAVAPGLVRYRHHERLCMGLKAKVVVELILQGRPWAQVLKALNHHFPESGPIVRDPKATKQDLRKILEAQETFYQQVKQLSEAPVDLASKLQELEQEYGEPFLAAMEKLLFEYLCQLEKALPTPQAQQLQDVLSWMQPGVSITSSLAWRQYGVDMGWLLPECSVTDSVNLAEPMEQNPPQQQRLALHNPLPKAKPGTHLPQGPSSRTHPEPLAGRHFNLAPLGRRRVQSQWASTRGGHKERPTVMLFPFRNLGSPTQVISKPESKEEHAIYTADLAMGTRAASTGKSKSPCQTLGGRALKENPVDLPATEQKENCLDCYMDPLRLSLLPPRARKPVCPPSLCSSVITIGDLVLDSDEEENGQGEGKESLENYQKTKFDTLIPTLCEYLPPSGHGAIPVSSCDCRDSSRPL</sequence>
<comment type="function">
    <text evidence="7 8">Component of the shelterin complex (telosome) that is involved in the regulation of telomere length and protection. Shelterin associates with arrays of double-stranded TTAGGG repeats added by telomerase and protects chromosome ends; without its protective activity, telomeres are no longer hidden from the DNA damage surveillance and chromosome ends are inappropriately processed by DNA repair pathways. Plays a role in shelterin complex assembly. Isoform 1 may have additional role in tethering telomeres to the nuclear matrix.</text>
</comment>
<comment type="subunit">
    <text evidence="3 4 5 6 9">Monomer. Found in a complex with POT1; TERF1 and TNKS1. Component of the shelterin complex (telosome) composed of TERF1, TERF2, TINF2, TERF2IP ACD and POT1. Interacts with TERF1, TERF2 and ACD.</text>
</comment>
<comment type="interaction">
    <interactant intactId="EBI-717399">
        <id>Q9BSI4</id>
    </interactant>
    <interactant intactId="EBI-717666">
        <id>Q96AP0</id>
        <label>ACD</label>
    </interactant>
    <organismsDiffer>false</organismsDiffer>
    <experiments>17</experiments>
</comment>
<comment type="interaction">
    <interactant intactId="EBI-717399">
        <id>Q9BSI4</id>
    </interactant>
    <interactant intactId="EBI-353944">
        <id>P60709</id>
        <label>ACTB</label>
    </interactant>
    <organismsDiffer>false</organismsDiffer>
    <experiments>2</experiments>
</comment>
<comment type="interaction">
    <interactant intactId="EBI-717399">
        <id>Q9BSI4</id>
    </interactant>
    <interactant intactId="EBI-6557414">
        <id>Q9NZN9</id>
        <label>AIPL1</label>
    </interactant>
    <organismsDiffer>false</organismsDiffer>
    <experiments>2</experiments>
</comment>
<comment type="interaction">
    <interactant intactId="EBI-717399">
        <id>Q9BSI4</id>
    </interactant>
    <interactant intactId="EBI-9393876">
        <id>Q8IV38</id>
        <label>ANKMY2</label>
    </interactant>
    <organismsDiffer>false</organismsDiffer>
    <experiments>2</experiments>
</comment>
<comment type="interaction">
    <interactant intactId="EBI-717399">
        <id>Q9BSI4</id>
    </interactant>
    <interactant intactId="EBI-2556852">
        <id>P09525</id>
        <label>ANXA4</label>
    </interactant>
    <organismsDiffer>false</organismsDiffer>
    <experiments>2</experiments>
</comment>
<comment type="interaction">
    <interactant intactId="EBI-717399">
        <id>Q9BSI4</id>
    </interactant>
    <interactant intactId="EBI-296601">
        <id>P08758</id>
        <label>ANXA5</label>
    </interactant>
    <organismsDiffer>false</organismsDiffer>
    <experiments>2</experiments>
</comment>
<comment type="interaction">
    <interactant intactId="EBI-717399">
        <id>Q9BSI4</id>
    </interactant>
    <interactant intactId="EBI-712693">
        <id>P52565</id>
        <label>ARHGDIA</label>
    </interactant>
    <organismsDiffer>false</organismsDiffer>
    <experiments>2</experiments>
</comment>
<comment type="interaction">
    <interactant intactId="EBI-717399">
        <id>Q9BSI4</id>
    </interactant>
    <interactant intactId="EBI-5458329">
        <id>Q8IVW6</id>
        <label>ARID3B</label>
    </interactant>
    <organismsDiffer>false</organismsDiffer>
    <experiments>2</experiments>
</comment>
<comment type="interaction">
    <interactant intactId="EBI-717399">
        <id>Q9BSI4</id>
    </interactant>
    <interactant intactId="EBI-747185">
        <id>O95817</id>
        <label>BAG3</label>
    </interactant>
    <organismsDiffer>false</organismsDiffer>
    <experiments>2</experiments>
</comment>
<comment type="interaction">
    <interactant intactId="EBI-717399">
        <id>Q9BSI4</id>
    </interactant>
    <interactant intactId="EBI-1642116">
        <id>Q05682</id>
        <label>CALD1</label>
    </interactant>
    <organismsDiffer>false</organismsDiffer>
    <experiments>2</experiments>
</comment>
<comment type="interaction">
    <interactant intactId="EBI-717399">
        <id>Q9BSI4</id>
    </interactant>
    <interactant intactId="EBI-9247198">
        <id>Q96MW1</id>
        <label>CCDC43</label>
    </interactant>
    <organismsDiffer>false</organismsDiffer>
    <experiments>2</experiments>
</comment>
<comment type="interaction">
    <interactant intactId="EBI-717399">
        <id>Q9BSI4</id>
    </interactant>
    <interactant intactId="EBI-2557532">
        <id>Q9Y3X0</id>
        <label>CCDC9</label>
    </interactant>
    <organismsDiffer>false</organismsDiffer>
    <experiments>2</experiments>
</comment>
<comment type="interaction">
    <interactant intactId="EBI-717399">
        <id>Q9BSI4</id>
    </interactant>
    <interactant intactId="EBI-745579">
        <id>P49761</id>
        <label>CLK3</label>
    </interactant>
    <organismsDiffer>false</organismsDiffer>
    <experiments>2</experiments>
</comment>
<comment type="interaction">
    <interactant intactId="EBI-717399">
        <id>Q9BSI4</id>
    </interactant>
    <interactant intactId="EBI-718988">
        <id>O75131</id>
        <label>CPNE3</label>
    </interactant>
    <organismsDiffer>false</organismsDiffer>
    <experiments>2</experiments>
</comment>
<comment type="interaction">
    <interactant intactId="EBI-717399">
        <id>Q9BSI4</id>
    </interactant>
    <interactant intactId="EBI-351394">
        <id>Q16643</id>
        <label>DBN1</label>
    </interactant>
    <organismsDiffer>false</organismsDiffer>
    <experiments>2</experiments>
</comment>
<comment type="interaction">
    <interactant intactId="EBI-717399">
        <id>Q9BSI4</id>
    </interactant>
    <interactant intactId="EBI-8646694">
        <id>O43602</id>
        <label>DCX</label>
    </interactant>
    <organismsDiffer>false</organismsDiffer>
    <experiments>2</experiments>
</comment>
<comment type="interaction">
    <interactant intactId="EBI-717399">
        <id>Q9BSI4</id>
    </interactant>
    <interactant intactId="EBI-970310">
        <id>P23588</id>
        <label>EIF4B</label>
    </interactant>
    <organismsDiffer>false</organismsDiffer>
    <experiments>2</experiments>
</comment>
<comment type="interaction">
    <interactant intactId="EBI-717399">
        <id>Q9BSI4</id>
    </interactant>
    <interactant intactId="EBI-713154">
        <id>P09104</id>
        <label>ENO2</label>
    </interactant>
    <organismsDiffer>false</organismsDiffer>
    <experiments>2</experiments>
</comment>
<comment type="interaction">
    <interactant intactId="EBI-717399">
        <id>Q9BSI4</id>
    </interactant>
    <interactant intactId="EBI-11308812">
        <id>Q86XD5</id>
        <label>FAM131B</label>
    </interactant>
    <organismsDiffer>false</organismsDiffer>
    <experiments>2</experiments>
</comment>
<comment type="interaction">
    <interactant intactId="EBI-717399">
        <id>Q9BSI4</id>
    </interactant>
    <interactant intactId="EBI-354056">
        <id>P04406</id>
        <label>GAPDH</label>
    </interactant>
    <organismsDiffer>false</organismsDiffer>
    <experiments>2</experiments>
</comment>
<comment type="interaction">
    <interactant intactId="EBI-717399">
        <id>Q9BSI4</id>
    </interactant>
    <interactant intactId="EBI-743960">
        <id>Q8N5Z5</id>
        <label>KCTD17</label>
    </interactant>
    <organismsDiffer>false</organismsDiffer>
    <experiments>2</experiments>
</comment>
<comment type="interaction">
    <interactant intactId="EBI-717399">
        <id>Q9BSI4</id>
    </interactant>
    <interactant intactId="EBI-10241423">
        <id>Q3ZCW2</id>
        <label>LGALSL</label>
    </interactant>
    <organismsDiffer>false</organismsDiffer>
    <experiments>2</experiments>
</comment>
<comment type="interaction">
    <interactant intactId="EBI-717399">
        <id>Q9BSI4</id>
    </interactant>
    <interactant intactId="EBI-721089">
        <id>P09960</id>
        <label>LTA4H</label>
    </interactant>
    <organismsDiffer>false</organismsDiffer>
    <experiments>2</experiments>
</comment>
<comment type="interaction">
    <interactant intactId="EBI-717399">
        <id>Q9BSI4</id>
    </interactant>
    <interactant intactId="EBI-602462">
        <id>P46734</id>
        <label>MAP2K3</label>
    </interactant>
    <organismsDiffer>false</organismsDiffer>
    <experiments>2</experiments>
</comment>
<comment type="interaction">
    <interactant intactId="EBI-717399">
        <id>Q9BSI4</id>
    </interactant>
    <interactant intactId="EBI-1053490">
        <id>Q9UBB6</id>
        <label>NCDN</label>
    </interactant>
    <organismsDiffer>false</organismsDiffer>
    <experiments>2</experiments>
</comment>
<comment type="interaction">
    <interactant intactId="EBI-717399">
        <id>Q9BSI4</id>
    </interactant>
    <interactant intactId="EBI-740992">
        <id>O60936</id>
        <label>NOL3</label>
    </interactant>
    <organismsDiffer>false</organismsDiffer>
    <experiments>2</experiments>
</comment>
<comment type="interaction">
    <interactant intactId="EBI-717399">
        <id>Q9BSI4</id>
    </interactant>
    <interactant intactId="EBI-10256818">
        <id>Q7Z2X7</id>
        <label>PAGE2</label>
    </interactant>
    <organismsDiffer>false</organismsDiffer>
    <experiments>2</experiments>
</comment>
<comment type="interaction">
    <interactant intactId="EBI-717399">
        <id>Q9BSI4</id>
    </interactant>
    <interactant intactId="EBI-597835">
        <id>P50542</id>
        <label>PEX5</label>
    </interactant>
    <organismsDiffer>false</organismsDiffer>
    <experiments>2</experiments>
</comment>
<comment type="interaction">
    <interactant intactId="EBI-717399">
        <id>Q9BSI4</id>
    </interactant>
    <interactant intactId="EBI-2861475">
        <id>P36871</id>
        <label>PGM1</label>
    </interactant>
    <organismsDiffer>false</organismsDiffer>
    <experiments>2</experiments>
</comment>
<comment type="interaction">
    <interactant intactId="EBI-717399">
        <id>Q9BSI4</id>
    </interactant>
    <interactant intactId="EBI-4399372">
        <id>Q96G03</id>
        <label>PGM2</label>
    </interactant>
    <organismsDiffer>false</organismsDiffer>
    <experiments>2</experiments>
</comment>
<comment type="interaction">
    <interactant intactId="EBI-717399">
        <id>Q9BSI4</id>
    </interactant>
    <interactant intactId="EBI-353408">
        <id>P14618</id>
        <label>PKM</label>
    </interactant>
    <organismsDiffer>false</organismsDiffer>
    <experiments>2</experiments>
</comment>
<comment type="interaction">
    <interactant intactId="EBI-717399">
        <id>Q9BSI4</id>
    </interactant>
    <interactant intactId="EBI-752420">
        <id>Q9NUX5</id>
        <label>POT1</label>
    </interactant>
    <organismsDiffer>false</organismsDiffer>
    <experiments>6</experiments>
</comment>
<comment type="interaction">
    <interactant intactId="EBI-717399">
        <id>Q9BSI4</id>
    </interactant>
    <interactant intactId="EBI-1056517">
        <id>P41236</id>
        <label>PPP1R2</label>
    </interactant>
    <organismsDiffer>false</organismsDiffer>
    <experiments>2</experiments>
</comment>
<comment type="interaction">
    <interactant intactId="EBI-717399">
        <id>Q9BSI4</id>
    </interactant>
    <interactant intactId="EBI-706216">
        <id>P05771</id>
        <label>PRKCB</label>
    </interactant>
    <organismsDiffer>false</organismsDiffer>
    <experiments>2</experiments>
</comment>
<comment type="interaction">
    <interactant intactId="EBI-717399">
        <id>Q9BSI4</id>
    </interactant>
    <interactant intactId="EBI-750603">
        <id>O43566</id>
        <label>RGS14</label>
    </interactant>
    <organismsDiffer>false</organismsDiffer>
    <experiments>2</experiments>
</comment>
<comment type="interaction">
    <interactant intactId="EBI-717399">
        <id>Q9BSI4</id>
    </interactant>
    <interactant intactId="EBI-354112">
        <id>P08865</id>
        <label>RPSA</label>
    </interactant>
    <organismsDiffer>false</organismsDiffer>
    <experiments>2</experiments>
</comment>
<comment type="interaction">
    <interactant intactId="EBI-717399">
        <id>Q9BSI4</id>
    </interactant>
    <interactant intactId="EBI-11306862">
        <id>Q96FV2</id>
        <label>SCRN2</label>
    </interactant>
    <organismsDiffer>false</organismsDiffer>
    <experiments>2</experiments>
</comment>
<comment type="interaction">
    <interactant intactId="EBI-717399">
        <id>Q9BSI4</id>
    </interactant>
    <interactant intactId="EBI-3913419">
        <id>O00338</id>
        <label>SULT1C2</label>
    </interactant>
    <organismsDiffer>false</organismsDiffer>
    <experiments>2</experiments>
</comment>
<comment type="interaction">
    <interactant intactId="EBI-717399">
        <id>Q9BSI4</id>
    </interactant>
    <interactant intactId="EBI-1054248">
        <id>Q01995</id>
        <label>TAGLN</label>
    </interactant>
    <organismsDiffer>false</organismsDiffer>
    <experiments>2</experiments>
</comment>
<comment type="interaction">
    <interactant intactId="EBI-717399">
        <id>Q9BSI4</id>
    </interactant>
    <interactant intactId="EBI-3505105">
        <id>O60907</id>
        <label>TBL1X</label>
    </interactant>
    <organismsDiffer>false</organismsDiffer>
    <experiments>2</experiments>
</comment>
<comment type="interaction">
    <interactant intactId="EBI-717399">
        <id>Q9BSI4</id>
    </interactant>
    <interactant intactId="EBI-710997">
        <id>P54274</id>
        <label>TERF1</label>
    </interactant>
    <organismsDiffer>false</organismsDiffer>
    <experiments>12</experiments>
</comment>
<comment type="interaction">
    <interactant intactId="EBI-717399">
        <id>Q9BSI4</id>
    </interactant>
    <interactant intactId="EBI-706637">
        <id>Q15554</id>
        <label>TERF2</label>
    </interactant>
    <organismsDiffer>false</organismsDiffer>
    <experiments>13</experiments>
</comment>
<comment type="interaction">
    <interactant intactId="EBI-717399">
        <id>Q9BSI4</id>
    </interactant>
    <interactant intactId="EBI-1054499">
        <id>Q15785</id>
        <label>TOMM34</label>
    </interactant>
    <organismsDiffer>false</organismsDiffer>
    <experiments>2</experiments>
</comment>
<comment type="interaction">
    <interactant intactId="EBI-717399">
        <id>Q9BSI4</id>
    </interactant>
    <interactant intactId="EBI-727384">
        <id>O95361</id>
        <label>TRIM16</label>
    </interactant>
    <organismsDiffer>false</organismsDiffer>
    <experiments>2</experiments>
</comment>
<comment type="interaction">
    <interactant intactId="EBI-717399">
        <id>Q9BSI4</id>
    </interactant>
    <interactant intactId="EBI-739936">
        <id>Q15642</id>
        <label>TRIP10</label>
    </interactant>
    <organismsDiffer>false</organismsDiffer>
    <experiments>2</experiments>
</comment>
<comment type="interaction">
    <interactant intactId="EBI-717399">
        <id>Q9BSI4</id>
    </interactant>
    <interactant intactId="EBI-350864">
        <id>P07437</id>
        <label>TUBB</label>
    </interactant>
    <organismsDiffer>false</organismsDiffer>
    <experiments>2</experiments>
</comment>
<comment type="interaction">
    <interactant intactId="EBI-717399">
        <id>Q9BSI4</id>
    </interactant>
    <interactant intactId="EBI-1055906">
        <id>Q9BRA2</id>
        <label>TXNDC17</label>
    </interactant>
    <organismsDiffer>false</organismsDiffer>
    <experiments>2</experiments>
</comment>
<comment type="interaction">
    <interactant intactId="EBI-717399">
        <id>Q9BSI4</id>
    </interactant>
    <interactant intactId="EBI-359832">
        <id>P61981</id>
        <label>YWHAG</label>
    </interactant>
    <organismsDiffer>false</organismsDiffer>
    <experiments>2</experiments>
</comment>
<comment type="interaction">
    <interactant intactId="EBI-717418">
        <id>Q9BSI4-3</id>
    </interactant>
    <interactant intactId="EBI-717666">
        <id>Q96AP0</id>
        <label>ACD</label>
    </interactant>
    <organismsDiffer>false</organismsDiffer>
    <experiments>6</experiments>
</comment>
<comment type="interaction">
    <interactant intactId="EBI-717418">
        <id>Q9BSI4-3</id>
    </interactant>
    <interactant intactId="EBI-710997">
        <id>P54274</id>
        <label>TERF1</label>
    </interactant>
    <organismsDiffer>false</organismsDiffer>
    <experiments>2</experiments>
</comment>
<comment type="interaction">
    <interactant intactId="EBI-717418">
        <id>Q9BSI4-3</id>
    </interactant>
    <interactant intactId="EBI-706637">
        <id>Q15554</id>
        <label>TERF2</label>
    </interactant>
    <organismsDiffer>false</organismsDiffer>
    <experiments>4</experiments>
</comment>
<comment type="interaction">
    <interactant intactId="EBI-717418">
        <id>Q9BSI4-3</id>
    </interactant>
    <interactant intactId="EBI-750109">
        <id>Q9NYB0</id>
        <label>TERF2IP</label>
    </interactant>
    <organismsDiffer>false</organismsDiffer>
    <experiments>3</experiments>
</comment>
<comment type="subcellular location">
    <subcellularLocation>
        <location evidence="12">Nucleus</location>
    </subcellularLocation>
    <subcellularLocation>
        <location evidence="12">Chromosome</location>
        <location evidence="12">Telomere</location>
    </subcellularLocation>
    <text>Associated with telomeres.</text>
</comment>
<comment type="subcellular location">
    <molecule>Isoform 1</molecule>
    <subcellularLocation>
        <location evidence="11">Nucleus matrix</location>
    </subcellularLocation>
</comment>
<comment type="alternative products">
    <event type="alternative splicing"/>
    <isoform>
        <id>Q9BSI4-1</id>
        <name>1</name>
        <name>TIN2L</name>
        <sequence type="displayed"/>
    </isoform>
    <isoform>
        <id>Q9BSI4-2</id>
        <name>2</name>
        <name>TIN2S</name>
        <sequence type="described" ref="VSP_003989"/>
    </isoform>
    <isoform>
        <id>Q9BSI4-3</id>
        <name>3</name>
        <sequence type="described" ref="VSP_003987 VSP_003988"/>
    </isoform>
    <text>Experimental confirmation may be lacking for some isoforms.</text>
</comment>
<comment type="tissue specificity">
    <text>Detected in heart, brain, placenta, lung, liver, skeletal muscle, kidney and pancreas.</text>
</comment>
<comment type="domain">
    <text evidence="9">The TBM domain mediates interaction with TERF1.</text>
</comment>
<comment type="disease" evidence="10">
    <disease id="DI-03165">
        <name>Dyskeratosis congenita, autosomal dominant, 3</name>
        <acronym>DKCA3</acronym>
        <description>A rare multisystem disorder caused by defective telomere maintenance. It is characterized by progressive bone marrow failure, and the clinical triad of reticulated skin hyperpigmentation, nail dystrophy, and mucosal leukoplakia. Common but variable features include premature graying, aplastic anemia, low platelets, osteoporosis, pulmonary fibrosis, and liver fibrosis among others. Early mortality is often associated with bone marrow failure, infections, fatal pulmonary complications, or malignancy.</description>
        <dbReference type="MIM" id="613990"/>
    </disease>
    <text>The disease is caused by variants affecting the gene represented in this entry.</text>
</comment>
<comment type="disease" evidence="10">
    <disease id="DI-00998">
        <name>Dyskeratosis congenita, autosomal dominant, 5</name>
        <acronym>DKCA5</acronym>
        <description>A disease characterized by bone marrow hypoplasia, nail dystrophy, fine sparse hair, fine reticulate skin pigmentation, oral leukoplakia, bilateral exudative retinopathy, cerebellar hypoplasia, and growth retardation.</description>
        <dbReference type="MIM" id="268130"/>
    </disease>
    <text>The disease is caused by variants affecting the gene represented in this entry.</text>
</comment>
<reference key="1">
    <citation type="journal article" date="1999" name="Nat. Genet.">
        <title>TIN2, a new regulator of telomere length in human cells.</title>
        <authorList>
            <person name="Kim S.-H."/>
            <person name="Kaminker P."/>
            <person name="Campisi J."/>
        </authorList>
    </citation>
    <scope>NUCLEOTIDE SEQUENCE [MRNA] (ISOFORM 2)</scope>
    <source>
        <tissue>Fibroblast</tissue>
    </source>
</reference>
<reference key="2">
    <citation type="journal article" date="2004" name="Nat. Genet.">
        <title>Complete sequencing and characterization of 21,243 full-length human cDNAs.</title>
        <authorList>
            <person name="Ota T."/>
            <person name="Suzuki Y."/>
            <person name="Nishikawa T."/>
            <person name="Otsuki T."/>
            <person name="Sugiyama T."/>
            <person name="Irie R."/>
            <person name="Wakamatsu A."/>
            <person name="Hayashi K."/>
            <person name="Sato H."/>
            <person name="Nagai K."/>
            <person name="Kimura K."/>
            <person name="Makita H."/>
            <person name="Sekine M."/>
            <person name="Obayashi M."/>
            <person name="Nishi T."/>
            <person name="Shibahara T."/>
            <person name="Tanaka T."/>
            <person name="Ishii S."/>
            <person name="Yamamoto J."/>
            <person name="Saito K."/>
            <person name="Kawai Y."/>
            <person name="Isono Y."/>
            <person name="Nakamura Y."/>
            <person name="Nagahari K."/>
            <person name="Murakami K."/>
            <person name="Yasuda T."/>
            <person name="Iwayanagi T."/>
            <person name="Wagatsuma M."/>
            <person name="Shiratori A."/>
            <person name="Sudo H."/>
            <person name="Hosoiri T."/>
            <person name="Kaku Y."/>
            <person name="Kodaira H."/>
            <person name="Kondo H."/>
            <person name="Sugawara M."/>
            <person name="Takahashi M."/>
            <person name="Kanda K."/>
            <person name="Yokoi T."/>
            <person name="Furuya T."/>
            <person name="Kikkawa E."/>
            <person name="Omura Y."/>
            <person name="Abe K."/>
            <person name="Kamihara K."/>
            <person name="Katsuta N."/>
            <person name="Sato K."/>
            <person name="Tanikawa M."/>
            <person name="Yamazaki M."/>
            <person name="Ninomiya K."/>
            <person name="Ishibashi T."/>
            <person name="Yamashita H."/>
            <person name="Murakawa K."/>
            <person name="Fujimori K."/>
            <person name="Tanai H."/>
            <person name="Kimata M."/>
            <person name="Watanabe M."/>
            <person name="Hiraoka S."/>
            <person name="Chiba Y."/>
            <person name="Ishida S."/>
            <person name="Ono Y."/>
            <person name="Takiguchi S."/>
            <person name="Watanabe S."/>
            <person name="Yosida M."/>
            <person name="Hotuta T."/>
            <person name="Kusano J."/>
            <person name="Kanehori K."/>
            <person name="Takahashi-Fujii A."/>
            <person name="Hara H."/>
            <person name="Tanase T.-O."/>
            <person name="Nomura Y."/>
            <person name="Togiya S."/>
            <person name="Komai F."/>
            <person name="Hara R."/>
            <person name="Takeuchi K."/>
            <person name="Arita M."/>
            <person name="Imose N."/>
            <person name="Musashino K."/>
            <person name="Yuuki H."/>
            <person name="Oshima A."/>
            <person name="Sasaki N."/>
            <person name="Aotsuka S."/>
            <person name="Yoshikawa Y."/>
            <person name="Matsunawa H."/>
            <person name="Ichihara T."/>
            <person name="Shiohata N."/>
            <person name="Sano S."/>
            <person name="Moriya S."/>
            <person name="Momiyama H."/>
            <person name="Satoh N."/>
            <person name="Takami S."/>
            <person name="Terashima Y."/>
            <person name="Suzuki O."/>
            <person name="Nakagawa S."/>
            <person name="Senoh A."/>
            <person name="Mizoguchi H."/>
            <person name="Goto Y."/>
            <person name="Shimizu F."/>
            <person name="Wakebe H."/>
            <person name="Hishigaki H."/>
            <person name="Watanabe T."/>
            <person name="Sugiyama A."/>
            <person name="Takemoto M."/>
            <person name="Kawakami B."/>
            <person name="Yamazaki M."/>
            <person name="Watanabe K."/>
            <person name="Kumagai A."/>
            <person name="Itakura S."/>
            <person name="Fukuzumi Y."/>
            <person name="Fujimori Y."/>
            <person name="Komiyama M."/>
            <person name="Tashiro H."/>
            <person name="Tanigami A."/>
            <person name="Fujiwara T."/>
            <person name="Ono T."/>
            <person name="Yamada K."/>
            <person name="Fujii Y."/>
            <person name="Ozaki K."/>
            <person name="Hirao M."/>
            <person name="Ohmori Y."/>
            <person name="Kawabata A."/>
            <person name="Hikiji T."/>
            <person name="Kobatake N."/>
            <person name="Inagaki H."/>
            <person name="Ikema Y."/>
            <person name="Okamoto S."/>
            <person name="Okitani R."/>
            <person name="Kawakami T."/>
            <person name="Noguchi S."/>
            <person name="Itoh T."/>
            <person name="Shigeta K."/>
            <person name="Senba T."/>
            <person name="Matsumura K."/>
            <person name="Nakajima Y."/>
            <person name="Mizuno T."/>
            <person name="Morinaga M."/>
            <person name="Sasaki M."/>
            <person name="Togashi T."/>
            <person name="Oyama M."/>
            <person name="Hata H."/>
            <person name="Watanabe M."/>
            <person name="Komatsu T."/>
            <person name="Mizushima-Sugano J."/>
            <person name="Satoh T."/>
            <person name="Shirai Y."/>
            <person name="Takahashi Y."/>
            <person name="Nakagawa K."/>
            <person name="Okumura K."/>
            <person name="Nagase T."/>
            <person name="Nomura N."/>
            <person name="Kikuchi H."/>
            <person name="Masuho Y."/>
            <person name="Yamashita R."/>
            <person name="Nakai K."/>
            <person name="Yada T."/>
            <person name="Nakamura Y."/>
            <person name="Ohara O."/>
            <person name="Isogai T."/>
            <person name="Sugano S."/>
        </authorList>
    </citation>
    <scope>NUCLEOTIDE SEQUENCE [LARGE SCALE MRNA] (ISOFORM 3)</scope>
    <source>
        <tissue>Teratocarcinoma</tissue>
    </source>
</reference>
<reference key="3">
    <citation type="journal article" date="2004" name="Genome Res.">
        <title>The status, quality, and expansion of the NIH full-length cDNA project: the Mammalian Gene Collection (MGC).</title>
        <authorList>
            <consortium name="The MGC Project Team"/>
        </authorList>
    </citation>
    <scope>NUCLEOTIDE SEQUENCE [LARGE SCALE MRNA] (ISOFORM 1)</scope>
    <source>
        <tissue>Placenta</tissue>
        <tissue>Uterus</tissue>
    </source>
</reference>
<reference key="4">
    <citation type="submission" date="2008-06" db="EMBL/GenBank/DDBJ databases">
        <title>A novel form of telomere-associated TIN2 localizes to the nuclear matrix.</title>
        <authorList>
            <person name="Kaminker P.G."/>
            <person name="Kim S.-H."/>
            <person name="Desprez P.Y."/>
            <person name="Campisi J."/>
        </authorList>
    </citation>
    <scope>NUCLEOTIDE SEQUENCE [MRNA] OF 163-451 (ISOFORM 1)</scope>
</reference>
<reference key="5">
    <citation type="journal article" date="2003" name="Nature">
        <title>POT1 as a terminal transducer of TRF1 telomere length control.</title>
        <authorList>
            <person name="Loayza D."/>
            <person name="De Lange T."/>
        </authorList>
    </citation>
    <scope>IDENTIFICATION IN A COMPLEX WITH POT1; TERF1 AND TNKS1</scope>
</reference>
<reference key="6">
    <citation type="journal article" date="2004" name="Genes Dev.">
        <title>POT1-interacting protein PIP1: a telomere length regulator that recruits POT1 to the TIN2/TRF1 complex.</title>
        <authorList>
            <person name="Ye J.Z.-S."/>
            <person name="Hockemeyer D."/>
            <person name="Krutchinsky A.N."/>
            <person name="Loayza D."/>
            <person name="Hooper S.M."/>
            <person name="Chait B.T."/>
            <person name="de Lange T."/>
        </authorList>
    </citation>
    <scope>INTERACTION WITH ACD</scope>
</reference>
<reference key="7">
    <citation type="journal article" date="2004" name="J. Biol. Chem.">
        <title>TIN2 binds TRF1 and TRF2 simultaneously and stabilizes the TRF2 complex on telomeres.</title>
        <authorList>
            <person name="Ye J.Z.-S."/>
            <person name="Donigian J.R."/>
            <person name="van Overbeek M."/>
            <person name="Loayza D."/>
            <person name="Luo Y."/>
            <person name="Krutchinsky A.N."/>
            <person name="Chait B.T."/>
            <person name="de Lange T."/>
        </authorList>
    </citation>
    <scope>IDENTIFICATION IN THE SHELTERIN COMPLEX</scope>
</reference>
<reference key="8">
    <citation type="journal article" date="2004" name="J. Biol. Chem.">
        <title>Telosome, a mammalian telomere-associated complex formed by multiple telomeric proteins.</title>
        <authorList>
            <person name="Liu D."/>
            <person name="O'Connor M.S."/>
            <person name="Qin J."/>
            <person name="Songyang Z."/>
        </authorList>
    </citation>
    <scope>IDENTIFICATION IN THE SHELTERIN COMPLEX</scope>
</reference>
<reference key="9">
    <citation type="journal article" date="2005" name="Genes Dev.">
        <title>Shelterin: the protein complex that shapes and safeguards human telomeres.</title>
        <authorList>
            <person name="de Lange T."/>
        </authorList>
    </citation>
    <scope>FUNCTION OF THE SHELTERIN COMPLEX</scope>
</reference>
<reference key="10">
    <citation type="journal article" date="2006" name="Proc. Natl. Acad. Sci. U.S.A.">
        <title>A critical role for TPP1 and TIN2 interaction in high-order telomeric complex assembly.</title>
        <authorList>
            <person name="O'Connor M.S."/>
            <person name="Safari A."/>
            <person name="Xin H."/>
            <person name="Liu D."/>
            <person name="Songyang Z."/>
        </authorList>
    </citation>
    <scope>FUNCTION IN SHELTERIN COMPLEX ASSEMBLY</scope>
</reference>
<reference key="11">
    <citation type="journal article" date="2008" name="Proc. Natl. Acad. Sci. U.S.A.">
        <title>A quantitative atlas of mitotic phosphorylation.</title>
        <authorList>
            <person name="Dephoure N."/>
            <person name="Zhou C."/>
            <person name="Villen J."/>
            <person name="Beausoleil S.A."/>
            <person name="Bakalarski C.E."/>
            <person name="Elledge S.J."/>
            <person name="Gygi S.P."/>
        </authorList>
    </citation>
    <scope>PHOSPHORYLATION [LARGE SCALE ANALYSIS] AT SER-295</scope>
    <scope>IDENTIFICATION BY MASS SPECTROMETRY [LARGE SCALE ANALYSIS]</scope>
    <source>
        <tissue>Cervix carcinoma</tissue>
    </source>
</reference>
<reference key="12">
    <citation type="journal article" date="2009" name="Cell Cycle">
        <title>The long and short of it: a new isoform of TIN2 in the nuclear matrix.</title>
        <authorList>
            <person name="Smith S."/>
        </authorList>
    </citation>
    <scope>ALTERNATIVE SPLICING (ISOFORM 2)</scope>
    <scope>SUBCELLULAR LOCATION</scope>
</reference>
<reference key="13">
    <citation type="journal article" date="2009" name="Cell Cycle">
        <title>A novel form of the telomere-associated protein TIN2 localizes to the nuclear matrix.</title>
        <authorList>
            <person name="Kaminker P.G."/>
            <person name="Kim S.H."/>
            <person name="Desprez P.Y."/>
            <person name="Campisi J."/>
        </authorList>
    </citation>
    <scope>FUNCTION (ISOFORM 1)</scope>
    <scope>SUBCELLULAR LOCATION (ISOFORM 1)</scope>
</reference>
<reference key="14">
    <citation type="journal article" date="2010" name="Sci. Signal.">
        <title>Quantitative phosphoproteomics reveals widespread full phosphorylation site occupancy during mitosis.</title>
        <authorList>
            <person name="Olsen J.V."/>
            <person name="Vermeulen M."/>
            <person name="Santamaria A."/>
            <person name="Kumar C."/>
            <person name="Miller M.L."/>
            <person name="Jensen L.J."/>
            <person name="Gnad F."/>
            <person name="Cox J."/>
            <person name="Jensen T.S."/>
            <person name="Nigg E.A."/>
            <person name="Brunak S."/>
            <person name="Mann M."/>
        </authorList>
    </citation>
    <scope>IDENTIFICATION BY MASS SPECTROMETRY [LARGE SCALE ANALYSIS]</scope>
    <source>
        <tissue>Cervix carcinoma</tissue>
    </source>
</reference>
<reference key="15">
    <citation type="journal article" date="2011" name="Sci. Signal.">
        <title>System-wide temporal characterization of the proteome and phosphoproteome of human embryonic stem cell differentiation.</title>
        <authorList>
            <person name="Rigbolt K.T."/>
            <person name="Prokhorova T.A."/>
            <person name="Akimov V."/>
            <person name="Henningsen J."/>
            <person name="Johansen P.T."/>
            <person name="Kratchmarova I."/>
            <person name="Kassem M."/>
            <person name="Mann M."/>
            <person name="Olsen J.V."/>
            <person name="Blagoev B."/>
        </authorList>
    </citation>
    <scope>IDENTIFICATION BY MASS SPECTROMETRY [LARGE SCALE ANALYSIS]</scope>
</reference>
<reference key="16">
    <citation type="journal article" date="2012" name="Proc. Natl. Acad. Sci. U.S.A.">
        <title>N-terminal acetylome analyses and functional insights of the N-terminal acetyltransferase NatB.</title>
        <authorList>
            <person name="Van Damme P."/>
            <person name="Lasa M."/>
            <person name="Polevoda B."/>
            <person name="Gazquez C."/>
            <person name="Elosegui-Artola A."/>
            <person name="Kim D.S."/>
            <person name="De Juan-Pardo E."/>
            <person name="Demeyer K."/>
            <person name="Hole K."/>
            <person name="Larrea E."/>
            <person name="Timmerman E."/>
            <person name="Prieto J."/>
            <person name="Arnesen T."/>
            <person name="Sherman F."/>
            <person name="Gevaert K."/>
            <person name="Aldabe R."/>
        </authorList>
    </citation>
    <scope>ACETYLATION [LARGE SCALE ANALYSIS] AT ALA-2</scope>
    <scope>CLEAVAGE OF INITIATOR METHIONINE [LARGE SCALE ANALYSIS]</scope>
    <scope>IDENTIFICATION BY MASS SPECTROMETRY [LARGE SCALE ANALYSIS]</scope>
</reference>
<reference key="17">
    <citation type="journal article" date="2013" name="J. Proteome Res.">
        <title>Toward a comprehensive characterization of a human cancer cell phosphoproteome.</title>
        <authorList>
            <person name="Zhou H."/>
            <person name="Di Palma S."/>
            <person name="Preisinger C."/>
            <person name="Peng M."/>
            <person name="Polat A.N."/>
            <person name="Heck A.J."/>
            <person name="Mohammed S."/>
        </authorList>
    </citation>
    <scope>PHOSPHORYLATION [LARGE SCALE ANALYSIS] AT SER-295</scope>
    <scope>IDENTIFICATION BY MASS SPECTROMETRY [LARGE SCALE ANALYSIS]</scope>
    <source>
        <tissue>Cervix carcinoma</tissue>
        <tissue>Erythroleukemia</tissue>
    </source>
</reference>
<reference key="18">
    <citation type="journal article" date="2017" name="Nat. Struct. Mol. Biol.">
        <title>Site-specific mapping of the human SUMO proteome reveals co-modification with phosphorylation.</title>
        <authorList>
            <person name="Hendriks I.A."/>
            <person name="Lyon D."/>
            <person name="Young C."/>
            <person name="Jensen L.J."/>
            <person name="Vertegaal A.C."/>
            <person name="Nielsen M.L."/>
        </authorList>
    </citation>
    <scope>SUMOYLATION [LARGE SCALE ANALYSIS] AT LYS-302; LYS-306; LYS-341 AND LYS-353</scope>
    <scope>IDENTIFICATION BY MASS SPECTROMETRY [LARGE SCALE ANALYSIS]</scope>
</reference>
<reference key="19">
    <citation type="journal article" date="2008" name="Science">
        <title>A shared docking motif in TRF1 and TRF2 used for differential recruitment of telomeric proteins.</title>
        <authorList>
            <person name="Chen Y."/>
            <person name="Yang Y."/>
            <person name="van Overbeek M."/>
            <person name="Donigian J.R."/>
            <person name="Baciu P."/>
            <person name="de Lange T."/>
            <person name="Lei M."/>
        </authorList>
    </citation>
    <scope>X-RAY CRYSTALLOGRAPHY (2.15 ANGSTROMS) OF 258-275 IN COMPLEX WITH TERF1 OR TERF2</scope>
    <scope>DOMAIN TBM</scope>
    <scope>MUTAGENESIS OF PHE-258 AND PRO-262</scope>
</reference>
<reference key="20">
    <citation type="journal article" date="2008" name="Am. J. Hum. Genet.">
        <title>TINF2, a component of the shelterin telomere protection complex, is mutated in dyskeratosis congenita.</title>
        <authorList>
            <person name="Savage S.A."/>
            <person name="Giri N."/>
            <person name="Baerlocher G.M."/>
            <person name="Orr N."/>
            <person name="Lansdorp P.M."/>
            <person name="Alter B.P."/>
        </authorList>
    </citation>
    <scope>VARIANTS DKCA3 GLU-280; HIS-282 AND SER-282</scope>
    <scope>VARIANT DKCA5 HIS-282</scope>
</reference>
<dbReference type="EMBL" id="AF195512">
    <property type="protein sequence ID" value="AAF18439.1"/>
    <property type="molecule type" value="mRNA"/>
</dbReference>
<dbReference type="EMBL" id="AK023166">
    <property type="protein sequence ID" value="BAB14440.1"/>
    <property type="molecule type" value="mRNA"/>
</dbReference>
<dbReference type="EMBL" id="BC005030">
    <property type="protein sequence ID" value="AAH05030.1"/>
    <property type="molecule type" value="mRNA"/>
</dbReference>
<dbReference type="EMBL" id="BC019343">
    <property type="protein sequence ID" value="AAH19343.1"/>
    <property type="molecule type" value="mRNA"/>
</dbReference>
<dbReference type="EMBL" id="EU851975">
    <property type="protein sequence ID" value="ACF17559.1"/>
    <property type="molecule type" value="mRNA"/>
</dbReference>
<dbReference type="CCDS" id="CCDS41936.1">
    <molecule id="Q9BSI4-1"/>
</dbReference>
<dbReference type="CCDS" id="CCDS41937.1">
    <molecule id="Q9BSI4-2"/>
</dbReference>
<dbReference type="RefSeq" id="NP_001092744.1">
    <molecule id="Q9BSI4-1"/>
    <property type="nucleotide sequence ID" value="NM_001099274.3"/>
</dbReference>
<dbReference type="RefSeq" id="NP_036593.2">
    <molecule id="Q9BSI4-2"/>
    <property type="nucleotide sequence ID" value="NM_012461.3"/>
</dbReference>
<dbReference type="PDB" id="3BQO">
    <property type="method" value="X-ray"/>
    <property type="resolution" value="2.00 A"/>
    <property type="chains" value="B=257-276"/>
</dbReference>
<dbReference type="PDB" id="3BU8">
    <property type="method" value="X-ray"/>
    <property type="resolution" value="2.15 A"/>
    <property type="chains" value="C/D=258-275"/>
</dbReference>
<dbReference type="PDB" id="5XYF">
    <property type="method" value="X-ray"/>
    <property type="resolution" value="2.20 A"/>
    <property type="chains" value="A=2-202"/>
</dbReference>
<dbReference type="PDBsum" id="3BQO"/>
<dbReference type="PDBsum" id="3BU8"/>
<dbReference type="PDBsum" id="5XYF"/>
<dbReference type="SMR" id="Q9BSI4"/>
<dbReference type="BioGRID" id="117660">
    <property type="interactions" value="141"/>
</dbReference>
<dbReference type="ComplexPortal" id="CPX-152">
    <property type="entry name" value="Shelterin complex"/>
</dbReference>
<dbReference type="CORUM" id="Q9BSI4"/>
<dbReference type="DIP" id="DIP-29413N"/>
<dbReference type="ELM" id="Q9BSI4"/>
<dbReference type="FunCoup" id="Q9BSI4">
    <property type="interactions" value="1611"/>
</dbReference>
<dbReference type="IntAct" id="Q9BSI4">
    <property type="interactions" value="118"/>
</dbReference>
<dbReference type="MINT" id="Q9BSI4"/>
<dbReference type="STRING" id="9606.ENSP00000267415"/>
<dbReference type="MoonDB" id="Q9BSI4">
    <property type="type" value="Predicted"/>
</dbReference>
<dbReference type="iPTMnet" id="Q9BSI4"/>
<dbReference type="PhosphoSitePlus" id="Q9BSI4"/>
<dbReference type="BioMuta" id="TINF2"/>
<dbReference type="DMDM" id="21542262"/>
<dbReference type="jPOST" id="Q9BSI4"/>
<dbReference type="MassIVE" id="Q9BSI4"/>
<dbReference type="PaxDb" id="9606-ENSP00000267415"/>
<dbReference type="PeptideAtlas" id="Q9BSI4"/>
<dbReference type="ProteomicsDB" id="78895">
    <molecule id="Q9BSI4-1"/>
</dbReference>
<dbReference type="ProteomicsDB" id="78896">
    <molecule id="Q9BSI4-2"/>
</dbReference>
<dbReference type="ProteomicsDB" id="78897">
    <molecule id="Q9BSI4-3"/>
</dbReference>
<dbReference type="Pumba" id="Q9BSI4"/>
<dbReference type="Antibodypedia" id="22798">
    <property type="antibodies" value="251 antibodies from 31 providers"/>
</dbReference>
<dbReference type="DNASU" id="26277"/>
<dbReference type="Ensembl" id="ENST00000267415.12">
    <molecule id="Q9BSI4-1"/>
    <property type="protein sequence ID" value="ENSP00000267415.7"/>
    <property type="gene ID" value="ENSG00000092330.19"/>
</dbReference>
<dbReference type="Ensembl" id="ENST00000399423.8">
    <molecule id="Q9BSI4-2"/>
    <property type="protein sequence ID" value="ENSP00000382350.4"/>
    <property type="gene ID" value="ENSG00000092330.19"/>
</dbReference>
<dbReference type="Ensembl" id="ENST00000642983.1">
    <molecule id="Q9BSI4-2"/>
    <property type="protein sequence ID" value="ENSP00000494089.1"/>
    <property type="gene ID" value="ENSG00000284915.3"/>
</dbReference>
<dbReference type="Ensembl" id="ENST00000646576.2">
    <molecule id="Q9BSI4-1"/>
    <property type="protein sequence ID" value="ENSP00000495019.1"/>
    <property type="gene ID" value="ENSG00000284915.3"/>
</dbReference>
<dbReference type="GeneID" id="26277"/>
<dbReference type="KEGG" id="hsa:26277"/>
<dbReference type="MANE-Select" id="ENST00000267415.12">
    <property type="protein sequence ID" value="ENSP00000267415.7"/>
    <property type="RefSeq nucleotide sequence ID" value="NM_001099274.3"/>
    <property type="RefSeq protein sequence ID" value="NP_001092744.1"/>
</dbReference>
<dbReference type="UCSC" id="uc001woa.5">
    <molecule id="Q9BSI4-1"/>
    <property type="organism name" value="human"/>
</dbReference>
<dbReference type="AGR" id="HGNC:11824"/>
<dbReference type="CTD" id="26277"/>
<dbReference type="DisGeNET" id="26277"/>
<dbReference type="GeneCards" id="TINF2"/>
<dbReference type="GeneReviews" id="TINF2"/>
<dbReference type="HGNC" id="HGNC:11824">
    <property type="gene designation" value="TINF2"/>
</dbReference>
<dbReference type="HPA" id="ENSG00000092330">
    <property type="expression patterns" value="Tissue enriched (parathyroid)"/>
</dbReference>
<dbReference type="MalaCards" id="TINF2"/>
<dbReference type="MIM" id="268130">
    <property type="type" value="phenotype"/>
</dbReference>
<dbReference type="MIM" id="604319">
    <property type="type" value="gene"/>
</dbReference>
<dbReference type="MIM" id="613990">
    <property type="type" value="phenotype"/>
</dbReference>
<dbReference type="neXtProt" id="NX_Q9BSI4"/>
<dbReference type="OpenTargets" id="ENSG00000092330"/>
<dbReference type="Orphanet" id="1775">
    <property type="disease" value="Dyskeratosis congenita"/>
</dbReference>
<dbReference type="Orphanet" id="3322">
    <property type="disease" value="Hoyeraal-Hreidarsson syndrome"/>
</dbReference>
<dbReference type="Orphanet" id="3088">
    <property type="disease" value="Revesz syndrome"/>
</dbReference>
<dbReference type="PharmGKB" id="PA36530"/>
<dbReference type="VEuPathDB" id="HostDB:ENSG00000092330"/>
<dbReference type="eggNOG" id="ENOG502S5UZ">
    <property type="taxonomic scope" value="Eukaryota"/>
</dbReference>
<dbReference type="GeneTree" id="ENSGT00400000022326"/>
<dbReference type="InParanoid" id="Q9BSI4"/>
<dbReference type="OMA" id="KERPMVM"/>
<dbReference type="OrthoDB" id="9948370at2759"/>
<dbReference type="PAN-GO" id="Q9BSI4">
    <property type="GO annotations" value="4 GO annotations based on evolutionary models"/>
</dbReference>
<dbReference type="PhylomeDB" id="Q9BSI4"/>
<dbReference type="TreeFam" id="TF334731"/>
<dbReference type="PathwayCommons" id="Q9BSI4"/>
<dbReference type="Reactome" id="R-HSA-110328">
    <property type="pathway name" value="Recognition and association of DNA glycosylase with site containing an affected pyrimidine"/>
</dbReference>
<dbReference type="Reactome" id="R-HSA-110329">
    <property type="pathway name" value="Cleavage of the damaged pyrimidine"/>
</dbReference>
<dbReference type="Reactome" id="R-HSA-110330">
    <property type="pathway name" value="Recognition and association of DNA glycosylase with site containing an affected purine"/>
</dbReference>
<dbReference type="Reactome" id="R-HSA-110331">
    <property type="pathway name" value="Cleavage of the damaged purine"/>
</dbReference>
<dbReference type="Reactome" id="R-HSA-1221632">
    <property type="pathway name" value="Meiotic synapsis"/>
</dbReference>
<dbReference type="Reactome" id="R-HSA-171306">
    <property type="pathway name" value="Packaging Of Telomere Ends"/>
</dbReference>
<dbReference type="Reactome" id="R-HSA-171319">
    <property type="pathway name" value="Telomere Extension By Telomerase"/>
</dbReference>
<dbReference type="Reactome" id="R-HSA-174411">
    <property type="pathway name" value="Polymerase switching on the C-strand of the telomere"/>
</dbReference>
<dbReference type="Reactome" id="R-HSA-174414">
    <property type="pathway name" value="Processive synthesis on the C-strand of the telomere"/>
</dbReference>
<dbReference type="Reactome" id="R-HSA-174417">
    <property type="pathway name" value="Telomere C-strand (Lagging Strand) Synthesis"/>
</dbReference>
<dbReference type="Reactome" id="R-HSA-174430">
    <property type="pathway name" value="Telomere C-strand synthesis initiation"/>
</dbReference>
<dbReference type="Reactome" id="R-HSA-174437">
    <property type="pathway name" value="Removal of the Flap Intermediate from the C-strand"/>
</dbReference>
<dbReference type="Reactome" id="R-HSA-2559586">
    <property type="pathway name" value="DNA Damage/Telomere Stress Induced Senescence"/>
</dbReference>
<dbReference type="Reactome" id="R-HSA-9670095">
    <property type="pathway name" value="Inhibition of DNA recombination at telomere"/>
</dbReference>
<dbReference type="SignaLink" id="Q9BSI4"/>
<dbReference type="SIGNOR" id="Q9BSI4"/>
<dbReference type="BioGRID-ORCS" id="26277">
    <property type="hits" value="742 hits in 1168 CRISPR screens"/>
</dbReference>
<dbReference type="ChiTaRS" id="TINF2">
    <property type="organism name" value="human"/>
</dbReference>
<dbReference type="EvolutionaryTrace" id="Q9BSI4"/>
<dbReference type="GeneWiki" id="TINF2"/>
<dbReference type="GenomeRNAi" id="26277"/>
<dbReference type="Pharos" id="Q9BSI4">
    <property type="development level" value="Tbio"/>
</dbReference>
<dbReference type="PRO" id="PR:Q9BSI4"/>
<dbReference type="Proteomes" id="UP000005640">
    <property type="component" value="Chromosome 14"/>
</dbReference>
<dbReference type="RNAct" id="Q9BSI4">
    <property type="molecule type" value="protein"/>
</dbReference>
<dbReference type="Bgee" id="ENSG00000092330">
    <property type="expression patterns" value="Expressed in granulocyte and 100 other cell types or tissues"/>
</dbReference>
<dbReference type="ExpressionAtlas" id="Q9BSI4">
    <property type="expression patterns" value="baseline and differential"/>
</dbReference>
<dbReference type="GO" id="GO:0000781">
    <property type="term" value="C:chromosome, telomeric region"/>
    <property type="evidence" value="ECO:0000314"/>
    <property type="project" value="BHF-UCL"/>
</dbReference>
<dbReference type="GO" id="GO:0016604">
    <property type="term" value="C:nuclear body"/>
    <property type="evidence" value="ECO:0000314"/>
    <property type="project" value="HPA"/>
</dbReference>
<dbReference type="GO" id="GO:0016363">
    <property type="term" value="C:nuclear matrix"/>
    <property type="evidence" value="ECO:0007669"/>
    <property type="project" value="UniProtKB-SubCell"/>
</dbReference>
<dbReference type="GO" id="GO:0000783">
    <property type="term" value="C:nuclear telomere cap complex"/>
    <property type="evidence" value="ECO:0000314"/>
    <property type="project" value="BHF-UCL"/>
</dbReference>
<dbReference type="GO" id="GO:0005654">
    <property type="term" value="C:nucleoplasm"/>
    <property type="evidence" value="ECO:0000304"/>
    <property type="project" value="Reactome"/>
</dbReference>
<dbReference type="GO" id="GO:0010370">
    <property type="term" value="C:perinucleolar chromocenter"/>
    <property type="evidence" value="ECO:0000314"/>
    <property type="project" value="BHF-UCL"/>
</dbReference>
<dbReference type="GO" id="GO:0070187">
    <property type="term" value="C:shelterin complex"/>
    <property type="evidence" value="ECO:0000314"/>
    <property type="project" value="BHF-UCL"/>
</dbReference>
<dbReference type="GO" id="GO:0042162">
    <property type="term" value="F:telomeric DNA binding"/>
    <property type="evidence" value="ECO:0000314"/>
    <property type="project" value="UniProtKB"/>
</dbReference>
<dbReference type="GO" id="GO:0050680">
    <property type="term" value="P:negative regulation of epithelial cell proliferation"/>
    <property type="evidence" value="ECO:0000315"/>
    <property type="project" value="BHF-UCL"/>
</dbReference>
<dbReference type="GO" id="GO:0032211">
    <property type="term" value="P:negative regulation of telomere maintenance via telomerase"/>
    <property type="evidence" value="ECO:0000315"/>
    <property type="project" value="BHF-UCL"/>
</dbReference>
<dbReference type="GO" id="GO:0032206">
    <property type="term" value="P:positive regulation of telomere maintenance"/>
    <property type="evidence" value="ECO:0000303"/>
    <property type="project" value="ComplexPortal"/>
</dbReference>
<dbReference type="GO" id="GO:0070198">
    <property type="term" value="P:protein localization to chromosome, telomeric region"/>
    <property type="evidence" value="ECO:0000314"/>
    <property type="project" value="CACAO"/>
</dbReference>
<dbReference type="GO" id="GO:1904356">
    <property type="term" value="P:regulation of telomere maintenance via telomere lengthening"/>
    <property type="evidence" value="ECO:0000315"/>
    <property type="project" value="BHF-UCL"/>
</dbReference>
<dbReference type="GO" id="GO:0032202">
    <property type="term" value="P:telomere assembly"/>
    <property type="evidence" value="ECO:0000315"/>
    <property type="project" value="BHF-UCL"/>
</dbReference>
<dbReference type="GO" id="GO:0016233">
    <property type="term" value="P:telomere capping"/>
    <property type="evidence" value="ECO:0000314"/>
    <property type="project" value="ComplexPortal"/>
</dbReference>
<dbReference type="CDD" id="cd11657">
    <property type="entry name" value="TIN2_N"/>
    <property type="match status" value="1"/>
</dbReference>
<dbReference type="CDD" id="cd11741">
    <property type="entry name" value="TIN2_TBM"/>
    <property type="match status" value="1"/>
</dbReference>
<dbReference type="IDEAL" id="IID00180"/>
<dbReference type="InterPro" id="IPR039098">
    <property type="entry name" value="TINF2"/>
</dbReference>
<dbReference type="InterPro" id="IPR029400">
    <property type="entry name" value="TINF2_N"/>
</dbReference>
<dbReference type="PANTHER" id="PTHR15512">
    <property type="entry name" value="TERF1-INTERACTING NUCLEAR FACTOR 2"/>
    <property type="match status" value="1"/>
</dbReference>
<dbReference type="PANTHER" id="PTHR15512:SF0">
    <property type="entry name" value="TERF1-INTERACTING NUCLEAR FACTOR 2"/>
    <property type="match status" value="1"/>
</dbReference>
<dbReference type="Pfam" id="PF14973">
    <property type="entry name" value="TINF2_N"/>
    <property type="match status" value="1"/>
</dbReference>
<feature type="initiator methionine" description="Removed" evidence="17">
    <location>
        <position position="1"/>
    </location>
</feature>
<feature type="chain" id="PRO_0000072541" description="TERF1-interacting nuclear factor 2">
    <location>
        <begin position="2"/>
        <end position="451"/>
    </location>
</feature>
<feature type="region of interest" description="Disordered" evidence="2">
    <location>
        <begin position="229"/>
        <end position="257"/>
    </location>
</feature>
<feature type="short sequence motif" description="TBM">
    <location>
        <begin position="256"/>
        <end position="278"/>
    </location>
</feature>
<feature type="short sequence motif" description="Nuclear localization signal" evidence="1">
    <location>
        <begin position="262"/>
        <end position="268"/>
    </location>
</feature>
<feature type="modified residue" description="N-acetylalanine" evidence="17">
    <location>
        <position position="2"/>
    </location>
</feature>
<feature type="modified residue" description="Phosphoserine" evidence="16 18">
    <location>
        <position position="295"/>
    </location>
</feature>
<feature type="cross-link" description="Glycyl lysine isopeptide (Lys-Gly) (interchain with G-Cter in SUMO2)" evidence="19">
    <location>
        <position position="302"/>
    </location>
</feature>
<feature type="cross-link" description="Glycyl lysine isopeptide (Lys-Gly) (interchain with G-Cter in SUMO2)" evidence="19">
    <location>
        <position position="306"/>
    </location>
</feature>
<feature type="cross-link" description="Glycyl lysine isopeptide (Lys-Gly) (interchain with G-Cter in SUMO2)" evidence="19">
    <location>
        <position position="341"/>
    </location>
</feature>
<feature type="cross-link" description="Glycyl lysine isopeptide (Lys-Gly) (interchain with G-Cter in SUMO2)" evidence="19">
    <location>
        <position position="353"/>
    </location>
</feature>
<feature type="splice variant" id="VSP_003987" description="In isoform 3." evidence="14">
    <original>ELEQ</original>
    <variation>VRLV</variation>
    <location>
        <begin position="134"/>
        <end position="137"/>
    </location>
</feature>
<feature type="splice variant" id="VSP_003988" description="In isoform 3." evidence="14">
    <location>
        <begin position="138"/>
        <end position="451"/>
    </location>
</feature>
<feature type="splice variant" id="VSP_003989" description="In isoform 2." evidence="13">
    <location>
        <begin position="355"/>
        <end position="451"/>
    </location>
</feature>
<feature type="sequence variant" id="VAR_051423" description="In dbSNP:rs35653076.">
    <original>A</original>
    <variation>T</variation>
    <location>
        <position position="43"/>
    </location>
</feature>
<feature type="sequence variant" id="VAR_051424" description="In dbSNP:rs17102313.">
    <original>G</original>
    <variation>D</variation>
    <location>
        <position position="237"/>
    </location>
</feature>
<feature type="sequence variant" id="VAR_051425" description="In dbSNP:rs17102311.">
    <original>P</original>
    <variation>S</variation>
    <location>
        <position position="241"/>
    </location>
</feature>
<feature type="sequence variant" id="VAR_043914" description="In DKCA3; dbSNP:rs121918543." evidence="10">
    <original>K</original>
    <variation>E</variation>
    <location>
        <position position="280"/>
    </location>
</feature>
<feature type="sequence variant" id="VAR_043915" description="In DKCA3 and DKCA5; dbSNP:rs121918544." evidence="10">
    <original>R</original>
    <variation>H</variation>
    <location>
        <position position="282"/>
    </location>
</feature>
<feature type="sequence variant" id="VAR_043916" description="In DKCA3; dbSNP:rs121918545." evidence="10">
    <original>R</original>
    <variation>S</variation>
    <location>
        <position position="282"/>
    </location>
</feature>
<feature type="mutagenesis site" description="Abolishes interaction with TERF1." evidence="9">
    <original>F</original>
    <variation>A</variation>
    <location>
        <position position="258"/>
    </location>
</feature>
<feature type="mutagenesis site" description="Does not effect interaction with TERF1." evidence="9">
    <original>P</original>
    <variation>A</variation>
    <location>
        <position position="262"/>
    </location>
</feature>
<feature type="sequence conflict" description="In Ref. 2; BAB14440." evidence="15" ref="2">
    <original>V</original>
    <variation>I</variation>
    <location>
        <position position="44"/>
    </location>
</feature>
<feature type="sequence conflict" description="In Ref. 2; BAB14440." evidence="15" ref="2">
    <location>
        <position position="67"/>
    </location>
</feature>
<feature type="sequence conflict" description="In Ref. 1; AAF18439." evidence="15" ref="1">
    <original>K</original>
    <variation>N</variation>
    <location>
        <position position="302"/>
    </location>
</feature>
<feature type="sequence conflict" description="In Ref. 1; AAF18439." evidence="15" ref="1">
    <original>ASTGKSKSPC</original>
    <variation>PSNGKYKGPY</variation>
    <location>
        <begin position="323"/>
        <end position="332"/>
    </location>
</feature>
<feature type="helix" evidence="21">
    <location>
        <begin position="8"/>
        <end position="24"/>
    </location>
</feature>
<feature type="helix" evidence="21">
    <location>
        <begin position="28"/>
        <end position="30"/>
    </location>
</feature>
<feature type="helix" evidence="21">
    <location>
        <begin position="31"/>
        <end position="44"/>
    </location>
</feature>
<feature type="helix" evidence="21">
    <location>
        <begin position="51"/>
        <end position="71"/>
    </location>
</feature>
<feature type="helix" evidence="21">
    <location>
        <begin position="76"/>
        <end position="86"/>
    </location>
</feature>
<feature type="helix" evidence="21">
    <location>
        <begin position="101"/>
        <end position="122"/>
    </location>
</feature>
<feature type="helix" evidence="21">
    <location>
        <begin position="128"/>
        <end position="138"/>
    </location>
</feature>
<feature type="helix" evidence="21">
    <location>
        <begin position="141"/>
        <end position="160"/>
    </location>
</feature>
<feature type="helix" evidence="21">
    <location>
        <begin position="169"/>
        <end position="177"/>
    </location>
</feature>
<feature type="helix" evidence="21">
    <location>
        <begin position="187"/>
        <end position="195"/>
    </location>
</feature>
<feature type="strand" evidence="20">
    <location>
        <begin position="263"/>
        <end position="265"/>
    </location>
</feature>